<accession>A6VJZ5</accession>
<gene>
    <name evidence="1" type="primary">sepS</name>
    <name type="ordered locus">MmarC7_1715</name>
</gene>
<dbReference type="EC" id="6.1.1.27" evidence="1"/>
<dbReference type="EMBL" id="CP000745">
    <property type="protein sequence ID" value="ABR66771.1"/>
    <property type="molecule type" value="Genomic_DNA"/>
</dbReference>
<dbReference type="SMR" id="A6VJZ5"/>
<dbReference type="STRING" id="426368.MmarC7_1715"/>
<dbReference type="KEGG" id="mmz:MmarC7_1715"/>
<dbReference type="eggNOG" id="arCOG00411">
    <property type="taxonomic scope" value="Archaea"/>
</dbReference>
<dbReference type="HOGENOM" id="CLU_506822_0_0_2"/>
<dbReference type="OrthoDB" id="145125at2157"/>
<dbReference type="GO" id="GO:0005524">
    <property type="term" value="F:ATP binding"/>
    <property type="evidence" value="ECO:0007669"/>
    <property type="project" value="UniProtKB-UniRule"/>
</dbReference>
<dbReference type="GO" id="GO:0043816">
    <property type="term" value="F:phosphoserine-tRNA(Cys) ligase activity"/>
    <property type="evidence" value="ECO:0007669"/>
    <property type="project" value="UniProtKB-EC"/>
</dbReference>
<dbReference type="GO" id="GO:0000049">
    <property type="term" value="F:tRNA binding"/>
    <property type="evidence" value="ECO:0007669"/>
    <property type="project" value="InterPro"/>
</dbReference>
<dbReference type="GO" id="GO:0006412">
    <property type="term" value="P:translation"/>
    <property type="evidence" value="ECO:0007669"/>
    <property type="project" value="UniProtKB-KW"/>
</dbReference>
<dbReference type="GO" id="GO:0043039">
    <property type="term" value="P:tRNA aminoacylation"/>
    <property type="evidence" value="ECO:0007669"/>
    <property type="project" value="UniProtKB-UniRule"/>
</dbReference>
<dbReference type="Gene3D" id="6.10.250.3340">
    <property type="match status" value="3"/>
</dbReference>
<dbReference type="Gene3D" id="6.20.250.20">
    <property type="match status" value="1"/>
</dbReference>
<dbReference type="Gene3D" id="3.30.930.10">
    <property type="entry name" value="Bira Bifunctional Protein, Domain 2"/>
    <property type="match status" value="1"/>
</dbReference>
<dbReference type="HAMAP" id="MF_01674">
    <property type="entry name" value="Sep_tRNA_synth"/>
    <property type="match status" value="1"/>
</dbReference>
<dbReference type="InterPro" id="IPR006195">
    <property type="entry name" value="aa-tRNA-synth_II"/>
</dbReference>
<dbReference type="InterPro" id="IPR045864">
    <property type="entry name" value="aa-tRNA-synth_II/BPL/LPL"/>
</dbReference>
<dbReference type="InterPro" id="IPR005246">
    <property type="entry name" value="O-Pseryl-tRNA(Cys)_ligase"/>
</dbReference>
<dbReference type="InterPro" id="IPR002319">
    <property type="entry name" value="Phenylalanyl-tRNA_Synthase"/>
</dbReference>
<dbReference type="InterPro" id="IPR041590">
    <property type="entry name" value="SepRS_C"/>
</dbReference>
<dbReference type="NCBIfam" id="TIGR00470">
    <property type="entry name" value="sepS"/>
    <property type="match status" value="1"/>
</dbReference>
<dbReference type="Pfam" id="PF18006">
    <property type="entry name" value="SepRS_C"/>
    <property type="match status" value="1"/>
</dbReference>
<dbReference type="Pfam" id="PF01409">
    <property type="entry name" value="tRNA-synt_2d"/>
    <property type="match status" value="1"/>
</dbReference>
<dbReference type="SUPFAM" id="SSF55681">
    <property type="entry name" value="Class II aaRS and biotin synthetases"/>
    <property type="match status" value="1"/>
</dbReference>
<dbReference type="PROSITE" id="PS50862">
    <property type="entry name" value="AA_TRNA_LIGASE_II"/>
    <property type="match status" value="1"/>
</dbReference>
<organism>
    <name type="scientific">Methanococcus maripaludis (strain C7 / ATCC BAA-1331)</name>
    <dbReference type="NCBI Taxonomy" id="426368"/>
    <lineage>
        <taxon>Archaea</taxon>
        <taxon>Methanobacteriati</taxon>
        <taxon>Methanobacteriota</taxon>
        <taxon>Methanomada group</taxon>
        <taxon>Methanococci</taxon>
        <taxon>Methanococcales</taxon>
        <taxon>Methanococcaceae</taxon>
        <taxon>Methanococcus</taxon>
    </lineage>
</organism>
<evidence type="ECO:0000255" key="1">
    <source>
        <dbReference type="HAMAP-Rule" id="MF_01674"/>
    </source>
</evidence>
<feature type="chain" id="PRO_0000363753" description="O-phosphoserine--tRNA(Cys) ligase">
    <location>
        <begin position="1"/>
        <end position="537"/>
    </location>
</feature>
<feature type="binding site" evidence="1">
    <location>
        <begin position="186"/>
        <end position="188"/>
    </location>
    <ligand>
        <name>substrate</name>
    </ligand>
</feature>
<feature type="binding site" evidence="1">
    <location>
        <begin position="231"/>
        <end position="233"/>
    </location>
    <ligand>
        <name>substrate</name>
    </ligand>
</feature>
<feature type="binding site" evidence="1">
    <location>
        <begin position="273"/>
        <end position="274"/>
    </location>
    <ligand>
        <name>substrate</name>
    </ligand>
</feature>
<feature type="binding site" evidence="1">
    <location>
        <position position="317"/>
    </location>
    <ligand>
        <name>substrate</name>
    </ligand>
</feature>
<comment type="function">
    <text evidence="1">Catalyzes the attachment of O-phosphoserine (Sep) to tRNA(Cys).</text>
</comment>
<comment type="catalytic activity">
    <reaction evidence="1">
        <text>tRNA(Cys) + O-phospho-L-serine + ATP = O-phospho-L-seryl-tRNA(Cys) + AMP + diphosphate</text>
        <dbReference type="Rhea" id="RHEA:25678"/>
        <dbReference type="Rhea" id="RHEA-COMP:9661"/>
        <dbReference type="Rhea" id="RHEA-COMP:9719"/>
        <dbReference type="ChEBI" id="CHEBI:30616"/>
        <dbReference type="ChEBI" id="CHEBI:33019"/>
        <dbReference type="ChEBI" id="CHEBI:57524"/>
        <dbReference type="ChEBI" id="CHEBI:78442"/>
        <dbReference type="ChEBI" id="CHEBI:78551"/>
        <dbReference type="ChEBI" id="CHEBI:456215"/>
        <dbReference type="EC" id="6.1.1.27"/>
    </reaction>
</comment>
<comment type="subunit">
    <text evidence="1">Homotetramer. Interacts with SepCysS.</text>
</comment>
<comment type="similarity">
    <text evidence="1">Belongs to the class-II aminoacyl-tRNA synthetase family. O-phosphoseryl-tRNA(Cys) synthetase subfamily.</text>
</comment>
<keyword id="KW-0030">Aminoacyl-tRNA synthetase</keyword>
<keyword id="KW-0067">ATP-binding</keyword>
<keyword id="KW-0436">Ligase</keyword>
<keyword id="KW-0547">Nucleotide-binding</keyword>
<keyword id="KW-0648">Protein biosynthesis</keyword>
<proteinExistence type="inferred from homology"/>
<sequence length="537" mass="61132">MFKREEIIEMANKDFEKAWIETKDLIKAKKVNESYPRIKPVFGKTHPVNDTIENLRQAYLRMGFEEYINPVIVDERDIYKQFGPEAMAVLDRCFYLAGLPRPDVGLSDEKISQIEKLGIKVSEHKESLQKILHGYKKGTLDGDDLVLEISNALEISSEMGLKILEEVFPEFKDLTAVSSKLTLRSHMTSGWFLTVSDLMNKKPLPFKLFSIDRCFRREQKEDKSHLMTYHSASCAIAGEGVDINDGKAIAEGLLSQFGFTNFKFIPDEKKSKYYTPETQTEVYAYHPKLKEWLEVATFGVYSPVALSKYGIDVPVMNLGLGVERLAMISGNFADVREMVYPQFYEHKLDDRAVASMVKLDKVPVMDEIYDLTKELIDSCVKNKDLKSPCELTIEKTFSFGKTKKNVKINIFEKEEGKNLLGPSILNEIYVYDGNVIGIPESFDGVKEEFKEFLEKGKSEGVATSIRYIDALCFKLTSKLEEAIVTNTSEFKVKVPIVRSLSDINLKIDDIALKQIMSKNKVIDVRGPVFLNVEVKIE</sequence>
<name>SEPS_METM7</name>
<reference key="1">
    <citation type="submission" date="2007-06" db="EMBL/GenBank/DDBJ databases">
        <title>Complete sequence of Methanococcus maripaludis C7.</title>
        <authorList>
            <consortium name="US DOE Joint Genome Institute"/>
            <person name="Copeland A."/>
            <person name="Lucas S."/>
            <person name="Lapidus A."/>
            <person name="Barry K."/>
            <person name="Glavina del Rio T."/>
            <person name="Dalin E."/>
            <person name="Tice H."/>
            <person name="Pitluck S."/>
            <person name="Clum A."/>
            <person name="Schmutz J."/>
            <person name="Larimer F."/>
            <person name="Land M."/>
            <person name="Hauser L."/>
            <person name="Kyrpides N."/>
            <person name="Anderson I."/>
            <person name="Sieprawska-Lupa M."/>
            <person name="Whitman W.B."/>
            <person name="Richardson P."/>
        </authorList>
    </citation>
    <scope>NUCLEOTIDE SEQUENCE [LARGE SCALE GENOMIC DNA]</scope>
    <source>
        <strain>C7 / ATCC BAA-1331</strain>
    </source>
</reference>
<protein>
    <recommendedName>
        <fullName evidence="1">O-phosphoserine--tRNA(Cys) ligase</fullName>
        <shortName evidence="1">O-phosphoserine--tRNA ligase</shortName>
        <ecNumber evidence="1">6.1.1.27</ecNumber>
    </recommendedName>
    <alternativeName>
        <fullName evidence="1">Non-canonical O-phosphoseryl-tRNA(Cys) synthetase</fullName>
    </alternativeName>
    <alternativeName>
        <fullName evidence="1">O-phosphoseryl-tRNA(Cys) synthetase</fullName>
        <shortName evidence="1">SepRS</shortName>
    </alternativeName>
</protein>